<protein>
    <recommendedName>
        <fullName evidence="1">Large ribosomal subunit protein uL29</fullName>
    </recommendedName>
    <alternativeName>
        <fullName evidence="2">50S ribosomal protein L29</fullName>
    </alternativeName>
</protein>
<organism>
    <name type="scientific">Escherichia coli O157:H7 (strain EC4115 / EHEC)</name>
    <dbReference type="NCBI Taxonomy" id="444450"/>
    <lineage>
        <taxon>Bacteria</taxon>
        <taxon>Pseudomonadati</taxon>
        <taxon>Pseudomonadota</taxon>
        <taxon>Gammaproteobacteria</taxon>
        <taxon>Enterobacterales</taxon>
        <taxon>Enterobacteriaceae</taxon>
        <taxon>Escherichia</taxon>
    </lineage>
</organism>
<accession>B5YTN3</accession>
<dbReference type="EMBL" id="CP001164">
    <property type="protein sequence ID" value="ACI37564.1"/>
    <property type="molecule type" value="Genomic_DNA"/>
</dbReference>
<dbReference type="RefSeq" id="WP_000644741.1">
    <property type="nucleotide sequence ID" value="NC_011353.1"/>
</dbReference>
<dbReference type="SMR" id="B5YTN3"/>
<dbReference type="GeneID" id="93778675"/>
<dbReference type="KEGG" id="ecf:ECH74115_4635"/>
<dbReference type="HOGENOM" id="CLU_158491_1_2_6"/>
<dbReference type="GO" id="GO:0022625">
    <property type="term" value="C:cytosolic large ribosomal subunit"/>
    <property type="evidence" value="ECO:0007669"/>
    <property type="project" value="TreeGrafter"/>
</dbReference>
<dbReference type="GO" id="GO:0003735">
    <property type="term" value="F:structural constituent of ribosome"/>
    <property type="evidence" value="ECO:0007669"/>
    <property type="project" value="InterPro"/>
</dbReference>
<dbReference type="GO" id="GO:0006412">
    <property type="term" value="P:translation"/>
    <property type="evidence" value="ECO:0007669"/>
    <property type="project" value="UniProtKB-UniRule"/>
</dbReference>
<dbReference type="CDD" id="cd00427">
    <property type="entry name" value="Ribosomal_L29_HIP"/>
    <property type="match status" value="1"/>
</dbReference>
<dbReference type="Gene3D" id="6.10.140.1970">
    <property type="match status" value="1"/>
</dbReference>
<dbReference type="HAMAP" id="MF_00374">
    <property type="entry name" value="Ribosomal_uL29"/>
    <property type="match status" value="1"/>
</dbReference>
<dbReference type="InterPro" id="IPR050063">
    <property type="entry name" value="Ribosomal_protein_uL29"/>
</dbReference>
<dbReference type="InterPro" id="IPR001854">
    <property type="entry name" value="Ribosomal_uL29"/>
</dbReference>
<dbReference type="InterPro" id="IPR018254">
    <property type="entry name" value="Ribosomal_uL29_CS"/>
</dbReference>
<dbReference type="InterPro" id="IPR036049">
    <property type="entry name" value="Ribosomal_uL29_sf"/>
</dbReference>
<dbReference type="NCBIfam" id="TIGR00012">
    <property type="entry name" value="L29"/>
    <property type="match status" value="1"/>
</dbReference>
<dbReference type="PANTHER" id="PTHR10916">
    <property type="entry name" value="60S RIBOSOMAL PROTEIN L35/50S RIBOSOMAL PROTEIN L29"/>
    <property type="match status" value="1"/>
</dbReference>
<dbReference type="PANTHER" id="PTHR10916:SF0">
    <property type="entry name" value="LARGE RIBOSOMAL SUBUNIT PROTEIN UL29C"/>
    <property type="match status" value="1"/>
</dbReference>
<dbReference type="Pfam" id="PF00831">
    <property type="entry name" value="Ribosomal_L29"/>
    <property type="match status" value="1"/>
</dbReference>
<dbReference type="SUPFAM" id="SSF46561">
    <property type="entry name" value="Ribosomal protein L29 (L29p)"/>
    <property type="match status" value="1"/>
</dbReference>
<dbReference type="PROSITE" id="PS00579">
    <property type="entry name" value="RIBOSOMAL_L29"/>
    <property type="match status" value="1"/>
</dbReference>
<feature type="chain" id="PRO_1000121765" description="Large ribosomal subunit protein uL29">
    <location>
        <begin position="1"/>
        <end position="63"/>
    </location>
</feature>
<comment type="similarity">
    <text evidence="1">Belongs to the universal ribosomal protein uL29 family.</text>
</comment>
<name>RL29_ECO5E</name>
<keyword id="KW-0687">Ribonucleoprotein</keyword>
<keyword id="KW-0689">Ribosomal protein</keyword>
<reference key="1">
    <citation type="journal article" date="2011" name="Proc. Natl. Acad. Sci. U.S.A.">
        <title>Genomic anatomy of Escherichia coli O157:H7 outbreaks.</title>
        <authorList>
            <person name="Eppinger M."/>
            <person name="Mammel M.K."/>
            <person name="Leclerc J.E."/>
            <person name="Ravel J."/>
            <person name="Cebula T.A."/>
        </authorList>
    </citation>
    <scope>NUCLEOTIDE SEQUENCE [LARGE SCALE GENOMIC DNA]</scope>
    <source>
        <strain>EC4115 / EHEC</strain>
    </source>
</reference>
<sequence length="63" mass="7273">MKAKELREKSVEELNTELLNLLREQFNLRMQAASGQLQQSHLLKQVRRDVARVKTLLNEKAGA</sequence>
<evidence type="ECO:0000255" key="1">
    <source>
        <dbReference type="HAMAP-Rule" id="MF_00374"/>
    </source>
</evidence>
<evidence type="ECO:0000305" key="2"/>
<gene>
    <name evidence="1" type="primary">rpmC</name>
    <name type="ordered locus">ECH74115_4635</name>
</gene>
<proteinExistence type="inferred from homology"/>